<name>OOEP_BOVIN</name>
<protein>
    <recommendedName>
        <fullName>Oocyte-expressed protein homolog</fullName>
    </recommendedName>
</protein>
<dbReference type="EMBL" id="BC126853">
    <property type="protein sequence ID" value="AAI26854.1"/>
    <property type="molecule type" value="mRNA"/>
</dbReference>
<dbReference type="RefSeq" id="NP_001071337.1">
    <property type="nucleotide sequence ID" value="NM_001077869.2"/>
</dbReference>
<dbReference type="SMR" id="A0JNQ6"/>
<dbReference type="FunCoup" id="A0JNQ6">
    <property type="interactions" value="28"/>
</dbReference>
<dbReference type="STRING" id="9913.ENSBTAP00000069221"/>
<dbReference type="PaxDb" id="9913-ENSBTAP00000026114"/>
<dbReference type="GeneID" id="507401"/>
<dbReference type="KEGG" id="bta:507401"/>
<dbReference type="CTD" id="441161"/>
<dbReference type="VEuPathDB" id="HostDB:ENSBTAG00000019600"/>
<dbReference type="eggNOG" id="ENOG502RU0M">
    <property type="taxonomic scope" value="Eukaryota"/>
</dbReference>
<dbReference type="HOGENOM" id="CLU_146793_0_0_1"/>
<dbReference type="InParanoid" id="A0JNQ6"/>
<dbReference type="OMA" id="RVRPWWF"/>
<dbReference type="OrthoDB" id="9533079at2759"/>
<dbReference type="TreeFam" id="TF338690"/>
<dbReference type="Proteomes" id="UP000009136">
    <property type="component" value="Chromosome 9"/>
</dbReference>
<dbReference type="Bgee" id="ENSBTAG00000019600">
    <property type="expression patterns" value="Expressed in oocyte and 100 other cell types or tissues"/>
</dbReference>
<dbReference type="GO" id="GO:0005938">
    <property type="term" value="C:cell cortex"/>
    <property type="evidence" value="ECO:0000250"/>
    <property type="project" value="UniProtKB"/>
</dbReference>
<dbReference type="GO" id="GO:0005737">
    <property type="term" value="C:cytoplasm"/>
    <property type="evidence" value="ECO:0000250"/>
    <property type="project" value="UniProtKB"/>
</dbReference>
<dbReference type="GO" id="GO:0140095">
    <property type="term" value="C:cytoplasmic lattice"/>
    <property type="evidence" value="ECO:0000250"/>
    <property type="project" value="UniProtKB"/>
</dbReference>
<dbReference type="GO" id="GO:0005634">
    <property type="term" value="C:nucleus"/>
    <property type="evidence" value="ECO:0000250"/>
    <property type="project" value="UniProtKB"/>
</dbReference>
<dbReference type="GO" id="GO:0032991">
    <property type="term" value="C:protein-containing complex"/>
    <property type="evidence" value="ECO:0000318"/>
    <property type="project" value="GO_Central"/>
</dbReference>
<dbReference type="GO" id="GO:0003723">
    <property type="term" value="F:RNA binding"/>
    <property type="evidence" value="ECO:0000318"/>
    <property type="project" value="GO_Central"/>
</dbReference>
<dbReference type="GO" id="GO:0140094">
    <property type="term" value="F:structural constituent of cytoplasmic lattice"/>
    <property type="evidence" value="ECO:0000250"/>
    <property type="project" value="UniProtKB"/>
</dbReference>
<dbReference type="GO" id="GO:0007015">
    <property type="term" value="P:actin filament organization"/>
    <property type="evidence" value="ECO:0000250"/>
    <property type="project" value="UniProtKB"/>
</dbReference>
<dbReference type="GO" id="GO:0009880">
    <property type="term" value="P:embryonic pattern specification"/>
    <property type="evidence" value="ECO:0000318"/>
    <property type="project" value="GO_Central"/>
</dbReference>
<dbReference type="GO" id="GO:0051293">
    <property type="term" value="P:establishment of spindle localization"/>
    <property type="evidence" value="ECO:0000250"/>
    <property type="project" value="UniProtKB"/>
</dbReference>
<dbReference type="GO" id="GO:0035088">
    <property type="term" value="P:establishment or maintenance of apical/basal cell polarity"/>
    <property type="evidence" value="ECO:0000318"/>
    <property type="project" value="GO_Central"/>
</dbReference>
<dbReference type="GO" id="GO:2000781">
    <property type="term" value="P:positive regulation of double-strand break repair"/>
    <property type="evidence" value="ECO:0000250"/>
    <property type="project" value="UniProtKB"/>
</dbReference>
<dbReference type="GO" id="GO:1905168">
    <property type="term" value="P:positive regulation of double-strand break repair via homologous recombination"/>
    <property type="evidence" value="ECO:0000250"/>
    <property type="project" value="UniProtKB"/>
</dbReference>
<dbReference type="GO" id="GO:0045836">
    <property type="term" value="P:positive regulation of meiotic nuclear division"/>
    <property type="evidence" value="ECO:0000250"/>
    <property type="project" value="UniProtKB"/>
</dbReference>
<dbReference type="GO" id="GO:0140089">
    <property type="term" value="P:protein storage"/>
    <property type="evidence" value="ECO:0000250"/>
    <property type="project" value="UniProtKB"/>
</dbReference>
<dbReference type="GO" id="GO:0051302">
    <property type="term" value="P:regulation of cell division"/>
    <property type="evidence" value="ECO:0000250"/>
    <property type="project" value="UniProtKB"/>
</dbReference>
<dbReference type="GO" id="GO:0070201">
    <property type="term" value="P:regulation of establishment of protein localization"/>
    <property type="evidence" value="ECO:0000250"/>
    <property type="project" value="UniProtKB"/>
</dbReference>
<dbReference type="GO" id="GO:0032880">
    <property type="term" value="P:regulation of protein localization"/>
    <property type="evidence" value="ECO:0000250"/>
    <property type="project" value="UniProtKB"/>
</dbReference>
<dbReference type="GO" id="GO:0031297">
    <property type="term" value="P:replication fork processing"/>
    <property type="evidence" value="ECO:0000250"/>
    <property type="project" value="UniProtKB"/>
</dbReference>
<dbReference type="CDD" id="cd12795">
    <property type="entry name" value="FILIA_N_like"/>
    <property type="match status" value="1"/>
</dbReference>
<dbReference type="Gene3D" id="3.30.1370.10">
    <property type="entry name" value="K Homology domain, type 1"/>
    <property type="match status" value="1"/>
</dbReference>
<dbReference type="InterPro" id="IPR036612">
    <property type="entry name" value="KH_dom_type_1_sf"/>
</dbReference>
<dbReference type="InterPro" id="IPR051778">
    <property type="entry name" value="KHDC1"/>
</dbReference>
<dbReference type="InterPro" id="IPR031952">
    <property type="entry name" value="MOEP19_KH-like"/>
</dbReference>
<dbReference type="PANTHER" id="PTHR19447:SF14">
    <property type="entry name" value="OOCYTE-EXPRESSED PROTEIN HOMOLOG"/>
    <property type="match status" value="1"/>
</dbReference>
<dbReference type="PANTHER" id="PTHR19447">
    <property type="entry name" value="OOCYTE-EXPRESSED PROTEIN HOMOLOG-RELATED"/>
    <property type="match status" value="1"/>
</dbReference>
<dbReference type="Pfam" id="PF16005">
    <property type="entry name" value="MOEP19"/>
    <property type="match status" value="1"/>
</dbReference>
<evidence type="ECO:0000250" key="1">
    <source>
        <dbReference type="UniProtKB" id="A6NGQ2"/>
    </source>
</evidence>
<evidence type="ECO:0000250" key="2">
    <source>
        <dbReference type="UniProtKB" id="Q9CWE6"/>
    </source>
</evidence>
<evidence type="ECO:0000305" key="3"/>
<proteinExistence type="evidence at transcript level"/>
<reference key="1">
    <citation type="submission" date="2006-10" db="EMBL/GenBank/DDBJ databases">
        <authorList>
            <consortium name="NIH - Mammalian Gene Collection (MGC) project"/>
        </authorList>
    </citation>
    <scope>NUCLEOTIDE SEQUENCE [LARGE SCALE MRNA]</scope>
    <source>
        <strain>Hereford</strain>
        <tissue>Fetal pons</tissue>
    </source>
</reference>
<comment type="function">
    <text evidence="2">Component of the subcortical maternal complex (SCMC), a multiprotein complex that plays a key role in early embryonic development. The SCMC complex is a structural constituent of cytoplasmic lattices, which consist in fibrous structures found in the cytoplasm of oocytes and preimplantation embryos. They are required to store maternal proteins critical for embryonic development, such as proteins that control epigenetic reprogramming of the preimplantation embryo, and prevent their degradation or activation. As part of the OOEP-KHDC3 scaffold, recruits BLM and TRIM25 to DNA replication forks, thereby promoting the ubiquitination of BLM by TRIM25, enhancing BLM retainment at replication forks and therefore promoting stalled replication fork restart. Positively regulates the homologous recombination-mediated DNA double-strand break (DSB) repair pathway by regulating ATM activation and RAD51 recruitment to DSBs in oocytes. Thereby contributes to oocyte survival and the resumption and completion of meiosis.</text>
</comment>
<comment type="subunit">
    <text evidence="1 2">Component of the subcortical maternal complex (SCMC), at least composed of NLRP5, KHDC3, OOEP, and TLE6 (By similarity). Within the complex, interacts with NLRP5, KHDC3 and TLE6 (By similarity). As part of the SCMC interacts with the SCMC-associated protein NLRP4F (By similarity). The SCMC may facilitate translocation of its components between the nuclear and cytoplasmic compartments (By similarity). Forms a scaffold complex with KHDC3/FILIA, and interacts with BLM and TRIM25 at DNA replication forks (By similarity).</text>
</comment>
<comment type="subcellular location">
    <subcellularLocation>
        <location evidence="2">Cytoplasm</location>
    </subcellularLocation>
    <subcellularLocation>
        <location evidence="2">Nucleus</location>
    </subcellularLocation>
    <text evidence="2">Core component of cytoplasmic lattices in oocytes. In the subcortical cytoplasm of early embryos from the 1-cell to the blastocyst stages. From the 2-cell stage, still detected in the subcortex, but excluded from cell-cell contact regions. Expression largely disappears in blastocysts.</text>
</comment>
<comment type="domain">
    <text>Contains an atypical KH domain with amino acid changes at critical sites, suggesting that it may not bind RNA.</text>
</comment>
<comment type="similarity">
    <text evidence="3">Belongs to the KHDC1 family.</text>
</comment>
<gene>
    <name type="primary">OOEP</name>
</gene>
<keyword id="KW-0963">Cytoplasm</keyword>
<keyword id="KW-0539">Nucleus</keyword>
<keyword id="KW-1185">Reference proteome</keyword>
<sequence length="140" mass="15868">MVDNAGDYEARGDRLLGFPLPSPRVRIRPWWFPAQELRNPLVFFLEAWLADLIFGPDRALVPEMEWMSQALLMVDAVDAGNLVEVTVFARPAVQRQVKSVLLSQASVHREQRARAEKMEQLEEFLKAQAPGPQVPQHPVA</sequence>
<organism>
    <name type="scientific">Bos taurus</name>
    <name type="common">Bovine</name>
    <dbReference type="NCBI Taxonomy" id="9913"/>
    <lineage>
        <taxon>Eukaryota</taxon>
        <taxon>Metazoa</taxon>
        <taxon>Chordata</taxon>
        <taxon>Craniata</taxon>
        <taxon>Vertebrata</taxon>
        <taxon>Euteleostomi</taxon>
        <taxon>Mammalia</taxon>
        <taxon>Eutheria</taxon>
        <taxon>Laurasiatheria</taxon>
        <taxon>Artiodactyla</taxon>
        <taxon>Ruminantia</taxon>
        <taxon>Pecora</taxon>
        <taxon>Bovidae</taxon>
        <taxon>Bovinae</taxon>
        <taxon>Bos</taxon>
    </lineage>
</organism>
<accession>A0JNQ6</accession>
<feature type="chain" id="PRO_0000328799" description="Oocyte-expressed protein homolog">
    <location>
        <begin position="1"/>
        <end position="140"/>
    </location>
</feature>
<feature type="domain" description="KH; atypical">
    <location>
        <begin position="40"/>
        <end position="101"/>
    </location>
</feature>